<reference key="1">
    <citation type="journal article" date="2009" name="Science">
        <title>The genome sequence of taurine cattle: a window to ruminant biology and evolution.</title>
        <authorList>
            <consortium name="The bovine genome sequencing and analysis consortium"/>
        </authorList>
    </citation>
    <scope>NUCLEOTIDE SEQUENCE [LARGE SCALE GENOMIC DNA]</scope>
    <source>
        <strain>Hereford</strain>
    </source>
</reference>
<reference key="2">
    <citation type="journal article" date="2005" name="Glycobiology">
        <title>The animal sialyltransferases and sialyltransferase-related genes: a phylogenetic approach.</title>
        <authorList>
            <person name="Harduin-Lepers A."/>
            <person name="Mollicone R."/>
            <person name="Delannoy P."/>
            <person name="Oriol R."/>
        </authorList>
    </citation>
    <scope>NUCLEOTIDE SEQUENCE [MRNA] OF 20-420</scope>
</reference>
<accession>Q70D51</accession>
<proteinExistence type="evidence at transcript level"/>
<gene>
    <name type="primary">ST3GAL5</name>
    <name type="synonym">SIAT9</name>
</gene>
<sequence>MRKKAAGGAERRPLKPRTEAAAAAPAGRAMPSDHSRMKLRRDCSRPSLQWYTRAQNKMRRPNLLLKDILKCTLLLFGVWILFYILKLNHTTEECDMKRMPYMDPDRIKRAQQYAQQVLQKECRPQFAKRSMAQLFGSRYSLDLPPFVTKVPAESEAEYKYDPPFGFRKFSGKVQTLLELLPEHDFPEHLRAKSCKHCVVIGSGGILHGLEMGHALNQFDVVIRLNNAPVEGYSEHVGNKTTIRMTYPEGAPLSDLEYYSSDLFVTVLFKSVDFNWLQAMVKNETLPFWVRLFFWKQVAEKIPLQPKQFRILNPVIIKETAFDILQYSEPQSRFWGRDKNVPTIGVIAVVLATHLCDEVSLAGFSYALNQPRTPLHYFDNLCMAAMNFQTMHNVTTETNFLLKLVREGVVRDLSGGIHSEF</sequence>
<comment type="function">
    <text evidence="2">Transfers the sialyl group (N-acetyl-alpha-neuraminyl or NeuAc) from CMP-NeuAc to the non-reducing terminal galactose (Gal) of glycosphingolipids forming gangliosides (important molecules involved in the regulation of multiple cellular processes, including cell proliferation and differentiation, apoptosis, embryogenesis, development, and oncogenesis). Mainly involved in the biosynthesis of ganglioside GM3 but can also use different glycolipids as substrate acceptors such as D-galactosylceramide (GalCer), asialo-GM2 (GA2) and asialo-GM1 (GA1), although less preferentially than beta-D-Gal-(1-&gt;4)-beta-D-Glc-(1&lt;-&gt;1)-Cer (LacCer).</text>
</comment>
<comment type="catalytic activity">
    <reaction evidence="2">
        <text>a beta-D-Gal-(1-&gt;4)-beta-D-Glc-(1&lt;-&gt;1)-Cer(d18:1(4E)) + CMP-N-acetyl-beta-neuraminate = a ganglioside GM3 (d18:1(4E)) + CMP + H(+)</text>
        <dbReference type="Rhea" id="RHEA:18417"/>
        <dbReference type="ChEBI" id="CHEBI:15378"/>
        <dbReference type="ChEBI" id="CHEBI:17950"/>
        <dbReference type="ChEBI" id="CHEBI:57812"/>
        <dbReference type="ChEBI" id="CHEBI:60065"/>
        <dbReference type="ChEBI" id="CHEBI:60377"/>
        <dbReference type="EC" id="2.4.3.9"/>
    </reaction>
    <physiologicalReaction direction="left-to-right" evidence="2">
        <dbReference type="Rhea" id="RHEA:18418"/>
    </physiologicalReaction>
</comment>
<comment type="catalytic activity">
    <reaction evidence="2">
        <text>ganglioside GA2 (d18:1(4E)/18:0) + CMP-N-acetyl-beta-neuraminate = ganglioside GM2 (d18:1(4E)/18:0) + CMP + H(+)</text>
        <dbReference type="Rhea" id="RHEA:41776"/>
        <dbReference type="ChEBI" id="CHEBI:15378"/>
        <dbReference type="ChEBI" id="CHEBI:57812"/>
        <dbReference type="ChEBI" id="CHEBI:60377"/>
        <dbReference type="ChEBI" id="CHEBI:78485"/>
        <dbReference type="ChEBI" id="CHEBI:78486"/>
    </reaction>
    <physiologicalReaction direction="left-to-right" evidence="2">
        <dbReference type="Rhea" id="RHEA:41777"/>
    </physiologicalReaction>
</comment>
<comment type="catalytic activity">
    <reaction evidence="2">
        <text>a beta-D-Gal-(1&lt;-&gt;1')-ceramide + CMP-N-acetyl-beta-neuraminate = N-acetyl-alpha-neuraminosyl-(2-&gt;3)-beta-D-galactosyl-(1&lt;-&gt;1')-ceramide + CMP + H(+)</text>
        <dbReference type="Rhea" id="RHEA:41780"/>
        <dbReference type="ChEBI" id="CHEBI:15378"/>
        <dbReference type="ChEBI" id="CHEBI:57812"/>
        <dbReference type="ChEBI" id="CHEBI:60377"/>
        <dbReference type="ChEBI" id="CHEBI:82643"/>
        <dbReference type="ChEBI" id="CHEBI:143593"/>
    </reaction>
    <physiologicalReaction direction="left-to-right" evidence="2">
        <dbReference type="Rhea" id="RHEA:41781"/>
    </physiologicalReaction>
</comment>
<comment type="catalytic activity">
    <reaction evidence="2">
        <text>ganglioside GA1 (d18:1(4E)/18:0) + CMP-N-acetyl-beta-neuraminate = ganglioside GM1 (d18:1(4E)/18:0) + CMP + H(+)</text>
        <dbReference type="Rhea" id="RHEA:41784"/>
        <dbReference type="ChEBI" id="CHEBI:15378"/>
        <dbReference type="ChEBI" id="CHEBI:57812"/>
        <dbReference type="ChEBI" id="CHEBI:60377"/>
        <dbReference type="ChEBI" id="CHEBI:73110"/>
        <dbReference type="ChEBI" id="CHEBI:78484"/>
    </reaction>
    <physiologicalReaction direction="left-to-right" evidence="2">
        <dbReference type="Rhea" id="RHEA:41785"/>
    </physiologicalReaction>
</comment>
<comment type="subcellular location">
    <subcellularLocation>
        <location evidence="5">Golgi apparatus membrane</location>
        <topology evidence="5">Single-pass type II membrane protein</topology>
    </subcellularLocation>
</comment>
<comment type="similarity">
    <text evidence="5">Belongs to the glycosyltransferase 29 family.</text>
</comment>
<comment type="sequence caution" evidence="5">
    <conflict type="erroneous initiation">
        <sequence resource="EMBL-CDS" id="CAE51392"/>
    </conflict>
</comment>
<name>SIAT9_BOVIN</name>
<evidence type="ECO:0000250" key="1"/>
<evidence type="ECO:0000250" key="2">
    <source>
        <dbReference type="UniProtKB" id="Q9UNP4"/>
    </source>
</evidence>
<evidence type="ECO:0000255" key="3"/>
<evidence type="ECO:0000256" key="4">
    <source>
        <dbReference type="SAM" id="MobiDB-lite"/>
    </source>
</evidence>
<evidence type="ECO:0000305" key="5"/>
<keyword id="KW-1015">Disulfide bond</keyword>
<keyword id="KW-0325">Glycoprotein</keyword>
<keyword id="KW-0328">Glycosyltransferase</keyword>
<keyword id="KW-0333">Golgi apparatus</keyword>
<keyword id="KW-0443">Lipid metabolism</keyword>
<keyword id="KW-0472">Membrane</keyword>
<keyword id="KW-1185">Reference proteome</keyword>
<keyword id="KW-0735">Signal-anchor</keyword>
<keyword id="KW-0808">Transferase</keyword>
<keyword id="KW-0812">Transmembrane</keyword>
<keyword id="KW-1133">Transmembrane helix</keyword>
<dbReference type="EC" id="2.4.3.9" evidence="2"/>
<dbReference type="EMBL" id="AAFC03040697">
    <property type="status" value="NOT_ANNOTATED_CDS"/>
    <property type="molecule type" value="Genomic_DNA"/>
</dbReference>
<dbReference type="EMBL" id="AAFC03065753">
    <property type="status" value="NOT_ANNOTATED_CDS"/>
    <property type="molecule type" value="Genomic_DNA"/>
</dbReference>
<dbReference type="EMBL" id="AJ585768">
    <property type="protein sequence ID" value="CAE51392.1"/>
    <property type="status" value="ALT_INIT"/>
    <property type="molecule type" value="mRNA"/>
</dbReference>
<dbReference type="RefSeq" id="NP_991376.2">
    <property type="nucleotide sequence ID" value="NM_205807.3"/>
</dbReference>
<dbReference type="SMR" id="Q70D51"/>
<dbReference type="FunCoup" id="Q70D51">
    <property type="interactions" value="242"/>
</dbReference>
<dbReference type="STRING" id="9913.ENSBTAP00000015414"/>
<dbReference type="CAZy" id="GT29">
    <property type="family name" value="Glycosyltransferase Family 29"/>
</dbReference>
<dbReference type="GlyCosmos" id="Q70D51">
    <property type="glycosylation" value="1 site, No reported glycans"/>
</dbReference>
<dbReference type="GlyGen" id="Q70D51">
    <property type="glycosylation" value="1 site"/>
</dbReference>
<dbReference type="PaxDb" id="9913-ENSBTAP00000015414"/>
<dbReference type="GeneID" id="404164"/>
<dbReference type="KEGG" id="bta:404164"/>
<dbReference type="CTD" id="8869"/>
<dbReference type="eggNOG" id="KOG2692">
    <property type="taxonomic scope" value="Eukaryota"/>
</dbReference>
<dbReference type="InParanoid" id="Q70D51"/>
<dbReference type="OrthoDB" id="10264956at2759"/>
<dbReference type="Proteomes" id="UP000009136">
    <property type="component" value="Unplaced"/>
</dbReference>
<dbReference type="GO" id="GO:0000139">
    <property type="term" value="C:Golgi membrane"/>
    <property type="evidence" value="ECO:0007669"/>
    <property type="project" value="UniProtKB-SubCell"/>
</dbReference>
<dbReference type="GO" id="GO:0047291">
    <property type="term" value="F:lactosylceramide alpha-2,3-sialyltransferase activity"/>
    <property type="evidence" value="ECO:0000250"/>
    <property type="project" value="UniProtKB"/>
</dbReference>
<dbReference type="GO" id="GO:0006629">
    <property type="term" value="P:lipid metabolic process"/>
    <property type="evidence" value="ECO:0007669"/>
    <property type="project" value="UniProtKB-KW"/>
</dbReference>
<dbReference type="GO" id="GO:0006486">
    <property type="term" value="P:protein glycosylation"/>
    <property type="evidence" value="ECO:0000318"/>
    <property type="project" value="GO_Central"/>
</dbReference>
<dbReference type="CDD" id="cd23983">
    <property type="entry name" value="GT29_ST3GAL5"/>
    <property type="match status" value="1"/>
</dbReference>
<dbReference type="FunFam" id="3.90.1480.20:FF:000006">
    <property type="entry name" value="ST3 beta-galactoside alpha-2,3-sialyltransferase 5"/>
    <property type="match status" value="1"/>
</dbReference>
<dbReference type="Gene3D" id="3.90.1480.20">
    <property type="entry name" value="Glycosyl transferase family 29"/>
    <property type="match status" value="1"/>
</dbReference>
<dbReference type="InterPro" id="IPR001675">
    <property type="entry name" value="Glyco_trans_29"/>
</dbReference>
<dbReference type="InterPro" id="IPR051142">
    <property type="entry name" value="Glycosyltransferase_29"/>
</dbReference>
<dbReference type="InterPro" id="IPR038578">
    <property type="entry name" value="GT29-like_sf"/>
</dbReference>
<dbReference type="InterPro" id="IPR012163">
    <property type="entry name" value="Sialyl_trans"/>
</dbReference>
<dbReference type="PANTHER" id="PTHR13713:SF60">
    <property type="entry name" value="LACTOSYLCERAMIDE ALPHA-2,3-SIALYLTRANSFERASE"/>
    <property type="match status" value="1"/>
</dbReference>
<dbReference type="PANTHER" id="PTHR13713">
    <property type="entry name" value="SIALYLTRANSFERASE"/>
    <property type="match status" value="1"/>
</dbReference>
<dbReference type="Pfam" id="PF00777">
    <property type="entry name" value="Glyco_transf_29"/>
    <property type="match status" value="1"/>
</dbReference>
<dbReference type="PIRSF" id="PIRSF005557">
    <property type="entry name" value="Sialyl_trans"/>
    <property type="match status" value="1"/>
</dbReference>
<organism>
    <name type="scientific">Bos taurus</name>
    <name type="common">Bovine</name>
    <dbReference type="NCBI Taxonomy" id="9913"/>
    <lineage>
        <taxon>Eukaryota</taxon>
        <taxon>Metazoa</taxon>
        <taxon>Chordata</taxon>
        <taxon>Craniata</taxon>
        <taxon>Vertebrata</taxon>
        <taxon>Euteleostomi</taxon>
        <taxon>Mammalia</taxon>
        <taxon>Eutheria</taxon>
        <taxon>Laurasiatheria</taxon>
        <taxon>Artiodactyla</taxon>
        <taxon>Ruminantia</taxon>
        <taxon>Pecora</taxon>
        <taxon>Bovidae</taxon>
        <taxon>Bovinae</taxon>
        <taxon>Bos</taxon>
    </lineage>
</organism>
<feature type="chain" id="PRO_0000334617" description="Lactosylceramide alpha-2,3-sialyltransferase">
    <location>
        <begin position="1"/>
        <end position="420"/>
    </location>
</feature>
<feature type="topological domain" description="Cytoplasmic" evidence="3">
    <location>
        <begin position="1"/>
        <end position="67"/>
    </location>
</feature>
<feature type="transmembrane region" description="Helical" evidence="3">
    <location>
        <begin position="68"/>
        <end position="88"/>
    </location>
</feature>
<feature type="topological domain" description="Lumenal" evidence="3">
    <location>
        <begin position="89"/>
        <end position="420"/>
    </location>
</feature>
<feature type="region of interest" description="Disordered" evidence="4">
    <location>
        <begin position="1"/>
        <end position="39"/>
    </location>
</feature>
<feature type="compositionally biased region" description="Basic and acidic residues" evidence="4">
    <location>
        <begin position="9"/>
        <end position="18"/>
    </location>
</feature>
<feature type="compositionally biased region" description="Low complexity" evidence="4">
    <location>
        <begin position="20"/>
        <end position="29"/>
    </location>
</feature>
<feature type="glycosylation site" description="N-linked (GlcNAc...) asparagine" evidence="3">
    <location>
        <position position="238"/>
    </location>
</feature>
<feature type="disulfide bond" evidence="1">
    <location>
        <begin position="197"/>
        <end position="355"/>
    </location>
</feature>
<protein>
    <recommendedName>
        <fullName>Lactosylceramide alpha-2,3-sialyltransferase</fullName>
        <ecNumber evidence="2">2.4.3.9</ecNumber>
    </recommendedName>
    <alternativeName>
        <fullName>CMP-NeuAc:lactosylceramide alpha-2,3-sialyltransferase</fullName>
    </alternativeName>
    <alternativeName>
        <fullName>Ganglioside GM3 synthase</fullName>
    </alternativeName>
    <alternativeName>
        <fullName>ST3Gal V</fullName>
        <shortName>ST3GalV</shortName>
    </alternativeName>
    <alternativeName>
        <fullName>Sialyltransferase 9</fullName>
    </alternativeName>
</protein>